<proteinExistence type="inferred from homology"/>
<keyword id="KW-0175">Coiled coil</keyword>
<keyword id="KW-0963">Cytoplasm</keyword>
<keyword id="KW-0967">Endosome</keyword>
<keyword id="KW-0472">Membrane</keyword>
<keyword id="KW-1185">Reference proteome</keyword>
<protein>
    <recommendedName>
        <fullName>Vacuolar-sorting protein SNF7</fullName>
    </recommendedName>
    <alternativeName>
        <fullName>Vacuolar protein-sorting-associated protein 32</fullName>
    </alternativeName>
</protein>
<feature type="chain" id="PRO_0000211445" description="Vacuolar-sorting protein SNF7">
    <location>
        <begin position="1"/>
        <end position="215"/>
    </location>
</feature>
<feature type="region of interest" description="Disordered" evidence="3">
    <location>
        <begin position="182"/>
        <end position="215"/>
    </location>
</feature>
<feature type="coiled-coil region" evidence="2">
    <location>
        <begin position="14"/>
        <end position="85"/>
    </location>
</feature>
<feature type="coiled-coil region" evidence="2">
    <location>
        <begin position="149"/>
        <end position="173"/>
    </location>
</feature>
<feature type="compositionally biased region" description="Basic and acidic residues" evidence="3">
    <location>
        <begin position="205"/>
        <end position="215"/>
    </location>
</feature>
<evidence type="ECO:0000250" key="1"/>
<evidence type="ECO:0000255" key="2"/>
<evidence type="ECO:0000256" key="3">
    <source>
        <dbReference type="SAM" id="MobiDB-lite"/>
    </source>
</evidence>
<evidence type="ECO:0000305" key="4"/>
<accession>Q6CBS3</accession>
<dbReference type="EMBL" id="CR382129">
    <property type="protein sequence ID" value="CAG82202.1"/>
    <property type="molecule type" value="Genomic_DNA"/>
</dbReference>
<dbReference type="RefSeq" id="XP_501889.1">
    <property type="nucleotide sequence ID" value="XM_501889.1"/>
</dbReference>
<dbReference type="SMR" id="Q6CBS3"/>
<dbReference type="FunCoup" id="Q6CBS3">
    <property type="interactions" value="682"/>
</dbReference>
<dbReference type="STRING" id="284591.Q6CBS3"/>
<dbReference type="EnsemblFungi" id="CAG82202">
    <property type="protein sequence ID" value="CAG82202"/>
    <property type="gene ID" value="YALI0_C16027g"/>
</dbReference>
<dbReference type="KEGG" id="yli:2909244"/>
<dbReference type="VEuPathDB" id="FungiDB:YALI0_C16027g"/>
<dbReference type="HOGENOM" id="CLU_071097_1_0_1"/>
<dbReference type="InParanoid" id="Q6CBS3"/>
<dbReference type="OMA" id="MKQIHGG"/>
<dbReference type="OrthoDB" id="100165at4891"/>
<dbReference type="Proteomes" id="UP000001300">
    <property type="component" value="Chromosome C"/>
</dbReference>
<dbReference type="GO" id="GO:0009898">
    <property type="term" value="C:cytoplasmic side of plasma membrane"/>
    <property type="evidence" value="ECO:0000318"/>
    <property type="project" value="GO_Central"/>
</dbReference>
<dbReference type="GO" id="GO:0005829">
    <property type="term" value="C:cytosol"/>
    <property type="evidence" value="ECO:0007669"/>
    <property type="project" value="EnsemblFungi"/>
</dbReference>
<dbReference type="GO" id="GO:0000815">
    <property type="term" value="C:ESCRT III complex"/>
    <property type="evidence" value="ECO:0000318"/>
    <property type="project" value="GO_Central"/>
</dbReference>
<dbReference type="GO" id="GO:0005771">
    <property type="term" value="C:multivesicular body"/>
    <property type="evidence" value="ECO:0000318"/>
    <property type="project" value="GO_Central"/>
</dbReference>
<dbReference type="GO" id="GO:0042802">
    <property type="term" value="F:identical protein binding"/>
    <property type="evidence" value="ECO:0007669"/>
    <property type="project" value="EnsemblFungi"/>
</dbReference>
<dbReference type="GO" id="GO:1904669">
    <property type="term" value="P:ATP export"/>
    <property type="evidence" value="ECO:0007669"/>
    <property type="project" value="EnsemblFungi"/>
</dbReference>
<dbReference type="GO" id="GO:0070676">
    <property type="term" value="P:intralumenal vesicle formation"/>
    <property type="evidence" value="ECO:0007669"/>
    <property type="project" value="EnsemblFungi"/>
</dbReference>
<dbReference type="GO" id="GO:0032511">
    <property type="term" value="P:late endosome to vacuole transport via multivesicular body sorting pathway"/>
    <property type="evidence" value="ECO:0000318"/>
    <property type="project" value="GO_Central"/>
</dbReference>
<dbReference type="GO" id="GO:0007031">
    <property type="term" value="P:peroxisome organization"/>
    <property type="evidence" value="ECO:0007669"/>
    <property type="project" value="EnsemblFungi"/>
</dbReference>
<dbReference type="GO" id="GO:0043328">
    <property type="term" value="P:protein transport to vacuole involved in ubiquitin-dependent protein catabolic process via the multivesicular body sorting pathway"/>
    <property type="evidence" value="ECO:0007669"/>
    <property type="project" value="EnsemblFungi"/>
</dbReference>
<dbReference type="GO" id="GO:0061709">
    <property type="term" value="P:reticulophagy"/>
    <property type="evidence" value="ECO:0007669"/>
    <property type="project" value="EnsemblFungi"/>
</dbReference>
<dbReference type="GO" id="GO:0006900">
    <property type="term" value="P:vesicle budding from membrane"/>
    <property type="evidence" value="ECO:0000318"/>
    <property type="project" value="GO_Central"/>
</dbReference>
<dbReference type="Gene3D" id="6.10.250.1710">
    <property type="match status" value="1"/>
</dbReference>
<dbReference type="Gene3D" id="1.10.287.1060">
    <property type="entry name" value="ESAT-6-like"/>
    <property type="match status" value="1"/>
</dbReference>
<dbReference type="InterPro" id="IPR005024">
    <property type="entry name" value="Snf7_fam"/>
</dbReference>
<dbReference type="PANTHER" id="PTHR22761">
    <property type="entry name" value="CHARGED MULTIVESICULAR BODY PROTEIN"/>
    <property type="match status" value="1"/>
</dbReference>
<dbReference type="PANTHER" id="PTHR22761:SF10">
    <property type="entry name" value="GH13992P"/>
    <property type="match status" value="1"/>
</dbReference>
<dbReference type="Pfam" id="PF03357">
    <property type="entry name" value="Snf7"/>
    <property type="match status" value="1"/>
</dbReference>
<organism>
    <name type="scientific">Yarrowia lipolytica (strain CLIB 122 / E 150)</name>
    <name type="common">Yeast</name>
    <name type="synonym">Candida lipolytica</name>
    <dbReference type="NCBI Taxonomy" id="284591"/>
    <lineage>
        <taxon>Eukaryota</taxon>
        <taxon>Fungi</taxon>
        <taxon>Dikarya</taxon>
        <taxon>Ascomycota</taxon>
        <taxon>Saccharomycotina</taxon>
        <taxon>Dipodascomycetes</taxon>
        <taxon>Dipodascales</taxon>
        <taxon>Dipodascales incertae sedis</taxon>
        <taxon>Yarrowia</taxon>
    </lineage>
</organism>
<reference key="1">
    <citation type="journal article" date="2004" name="Nature">
        <title>Genome evolution in yeasts.</title>
        <authorList>
            <person name="Dujon B."/>
            <person name="Sherman D."/>
            <person name="Fischer G."/>
            <person name="Durrens P."/>
            <person name="Casaregola S."/>
            <person name="Lafontaine I."/>
            <person name="de Montigny J."/>
            <person name="Marck C."/>
            <person name="Neuveglise C."/>
            <person name="Talla E."/>
            <person name="Goffard N."/>
            <person name="Frangeul L."/>
            <person name="Aigle M."/>
            <person name="Anthouard V."/>
            <person name="Babour A."/>
            <person name="Barbe V."/>
            <person name="Barnay S."/>
            <person name="Blanchin S."/>
            <person name="Beckerich J.-M."/>
            <person name="Beyne E."/>
            <person name="Bleykasten C."/>
            <person name="Boisrame A."/>
            <person name="Boyer J."/>
            <person name="Cattolico L."/>
            <person name="Confanioleri F."/>
            <person name="de Daruvar A."/>
            <person name="Despons L."/>
            <person name="Fabre E."/>
            <person name="Fairhead C."/>
            <person name="Ferry-Dumazet H."/>
            <person name="Groppi A."/>
            <person name="Hantraye F."/>
            <person name="Hennequin C."/>
            <person name="Jauniaux N."/>
            <person name="Joyet P."/>
            <person name="Kachouri R."/>
            <person name="Kerrest A."/>
            <person name="Koszul R."/>
            <person name="Lemaire M."/>
            <person name="Lesur I."/>
            <person name="Ma L."/>
            <person name="Muller H."/>
            <person name="Nicaud J.-M."/>
            <person name="Nikolski M."/>
            <person name="Oztas S."/>
            <person name="Ozier-Kalogeropoulos O."/>
            <person name="Pellenz S."/>
            <person name="Potier S."/>
            <person name="Richard G.-F."/>
            <person name="Straub M.-L."/>
            <person name="Suleau A."/>
            <person name="Swennen D."/>
            <person name="Tekaia F."/>
            <person name="Wesolowski-Louvel M."/>
            <person name="Westhof E."/>
            <person name="Wirth B."/>
            <person name="Zeniou-Meyer M."/>
            <person name="Zivanovic Y."/>
            <person name="Bolotin-Fukuhara M."/>
            <person name="Thierry A."/>
            <person name="Bouchier C."/>
            <person name="Caudron B."/>
            <person name="Scarpelli C."/>
            <person name="Gaillardin C."/>
            <person name="Weissenbach J."/>
            <person name="Wincker P."/>
            <person name="Souciet J.-L."/>
        </authorList>
    </citation>
    <scope>NUCLEOTIDE SEQUENCE [LARGE SCALE GENOMIC DNA]</scope>
    <source>
        <strain>CLIB 122 / E 150</strain>
    </source>
</reference>
<comment type="function">
    <text evidence="1">Required for the sorting and concentration of proteins resulting in the entry of these proteins into the invaginating vesicles of the multivesicular body (MVB). Also required for the proteolytic cleavage of the transcription factor RIM101 in response to alkaline ambient pH (By similarity).</text>
</comment>
<comment type="subunit">
    <text evidence="1">A component of the endosomal sorting required for transport complex III (ESCRT-III).</text>
</comment>
<comment type="subcellular location">
    <subcellularLocation>
        <location evidence="1">Cytoplasm</location>
    </subcellularLocation>
    <subcellularLocation>
        <location evidence="1">Endosome membrane</location>
        <topology evidence="1">Peripheral membrane protein</topology>
    </subcellularLocation>
</comment>
<comment type="similarity">
    <text evidence="4">Belongs to the SNF7 family.</text>
</comment>
<sequence>MWGFFGGAKKQDPKDTIISLRQQIIVLNKKNDNLIVQIQEQENLARKHVTTNKLMAKNALKKKKNLEKQQETVQGSIDSLQTSINTLETANLNLETMKAMQEGAKAMKQIHGNMNIDKVDKIMDETRDQVALSEEVSEAISRPYANAYDDEELEDELEALEQETLEGELTNAGHVKQDGVQVTPHDLPAAPNQVPAEEEDDEEEELRRLQREMAL</sequence>
<gene>
    <name type="primary">SNF7</name>
    <name type="synonym">VPS32</name>
    <name type="ordered locus">YALI0C16027g</name>
</gene>
<name>SNF7_YARLI</name>